<accession>Q852M1</accession>
<gene>
    <name type="ordered locus">Os03g0790900</name>
    <name type="ordered locus">LOC_Os03g57690</name>
    <name type="ORF">OSJNBa0087O09.20</name>
</gene>
<sequence>MGSEAAAARPVVVTVNGERYEAVGVDPSTTLLEFLRTRTPVRGPKLGCGEGGCGACVVVVSKYDAVADEVTEFSASSCLTLLGSLHHCAVTTSEGIGNSRDGFHAVQRRLSGFHASQCGFCTPGMCMSIYSALAKADRCSSRPSPPPGFSKLTAAEAEKAVSGNLCRCTGYRPIVDACKSFAADVDLEDLGLNAFWKKGADDERADVGKLPAYSGGAAVCTFPEFLKSEIRSSMGQANGGAPAVAVTGDGWFHPKSVEEFHRLFDSNLFDERSVKIVASNTGSGVYKDQDLHDKYINISQILELSAINRSSKGVEIGAVVSISKAIEILSDGGAVFRKIADHLSKVASSFVQNTATIGGNIIMAQRLSFPSDIATVLLAAGSTVTIQVAAKRMCITLEEFLKQPPCDSRTLLVSISIPDWGSDDGITFESFRAAPRPLGNAVSYVNSAFLARSSVDGSSGSHLIEDVCLAFGAFGAEHAIRAREVEEFLKGKLVSAPVILEAVRLLKGVVSPAEGTTHPEYRVSLAVSYLFRFLTSLANGLDEPENANVPNGSCTNGTANGSANSSPEKHSNVDSSDLPIKSRQEMVFSDEYKPVGKPIEKTGAELQASGEAVYVDDIPAPKDCLYGAFIYSTHPHAHIKDINFRSSLASQKVITVITAKDIPTGGENIGSCFPMLGDEALFVHPVSEFAGQNIGVVIAETQKYAYMAAKQAVIEYSTENLQPPILTIEDAVQHNSYFPVPPFLAPTPIGDFNQAMSEADHKIIDGEVKLESQYYFYMETQTALAIPDEDNCITLYVSAQLPEITQNTVARCLGIPYHNVRIITRRVGGGFGGKAMKAIHVAAACAVAAFKLRRPVRMYLDRKTDMIMAGGRHPMKVKYSVGFKSDGKITGLHFDLGMNGGISPDCSPVLPVAIVGALKKYNWGALSFDIKVCKTNVSSKSAMRAPGDAQGSFIAEAIVEHIASTLSVDTNAIRRKNLHDFESLKVFYGNSAGDPSTYSLVTIFDKLASSPEYQQRAAMVEHFNAGNRWKKRGISCVPITYDVRLRPTPGKVSIMNDGSIAVEVGGVEIGQGLWTKVKQMTAFALGQLCDDGGEGLIDKVRVIQADTLSMIQGGFTGGSTTSETSCEAVRKSCAALVERLKPIKEKAGTPPWKSLIAQASMASVKLTEHAYWTPDPTFTSYLNYGAAISEVEVDVLTGETTILRSDLVYDCGQSLNPAVDLGQVEGAFVQGIGFFTNEEYTTNSDGLVINDGTWTYKIPTVDTIPKQFNVELINSARDHKRVLSSKASGEPPLLLASSVHCAMREAIRAARKEFAGAGGSPLTFQMDVPATMPIVKELCGLDVVERYLESFAAKA</sequence>
<keyword id="KW-0001">2Fe-2S</keyword>
<keyword id="KW-0937">Abscisic acid biosynthesis</keyword>
<keyword id="KW-0073">Auxin biosynthesis</keyword>
<keyword id="KW-0274">FAD</keyword>
<keyword id="KW-0285">Flavoprotein</keyword>
<keyword id="KW-0408">Iron</keyword>
<keyword id="KW-0411">Iron-sulfur</keyword>
<keyword id="KW-0479">Metal-binding</keyword>
<keyword id="KW-0500">Molybdenum</keyword>
<keyword id="KW-0520">NAD</keyword>
<keyword id="KW-0560">Oxidoreductase</keyword>
<keyword id="KW-1185">Reference proteome</keyword>
<comment type="catalytic activity">
    <reaction>
        <text>an aldehyde + O2 + H2O = a carboxylate + H2O2 + H(+)</text>
        <dbReference type="Rhea" id="RHEA:16829"/>
        <dbReference type="ChEBI" id="CHEBI:15377"/>
        <dbReference type="ChEBI" id="CHEBI:15378"/>
        <dbReference type="ChEBI" id="CHEBI:15379"/>
        <dbReference type="ChEBI" id="CHEBI:16240"/>
        <dbReference type="ChEBI" id="CHEBI:17478"/>
        <dbReference type="ChEBI" id="CHEBI:29067"/>
        <dbReference type="EC" id="1.2.3.1"/>
    </reaction>
</comment>
<comment type="cofactor">
    <cofactor evidence="1">
        <name>[2Fe-2S] cluster</name>
        <dbReference type="ChEBI" id="CHEBI:190135"/>
    </cofactor>
    <text evidence="1">Binds 2 [2Fe-2S] clusters.</text>
</comment>
<comment type="cofactor">
    <cofactor evidence="1">
        <name>FAD</name>
        <dbReference type="ChEBI" id="CHEBI:57692"/>
    </cofactor>
</comment>
<comment type="cofactor">
    <cofactor evidence="1">
        <name>Mo-molybdopterin</name>
        <dbReference type="ChEBI" id="CHEBI:71302"/>
    </cofactor>
    <text evidence="1">Binds 1 Mo-molybdopterin (Mo-MPT) cofactor per subunit.</text>
</comment>
<comment type="subunit">
    <text evidence="1">Aldehyde oxidases (AO) are homodimers and heterodimers of AO subunits.</text>
</comment>
<comment type="similarity">
    <text evidence="5">Belongs to the xanthine dehydrogenase family.</text>
</comment>
<comment type="sequence caution" evidence="5">
    <conflict type="frameshift">
        <sequence resource="EMBL" id="AK100342"/>
    </conflict>
</comment>
<name>ALDO2_ORYSJ</name>
<feature type="chain" id="PRO_0000247646" description="Probable aldehyde oxidase 2">
    <location>
        <begin position="1"/>
        <end position="1355"/>
    </location>
</feature>
<feature type="domain" description="2Fe-2S ferredoxin-type" evidence="2">
    <location>
        <begin position="9"/>
        <end position="96"/>
    </location>
</feature>
<feature type="domain" description="FAD-binding PCMH-type" evidence="3">
    <location>
        <begin position="244"/>
        <end position="422"/>
    </location>
</feature>
<feature type="region of interest" description="Disordered" evidence="4">
    <location>
        <begin position="544"/>
        <end position="577"/>
    </location>
</feature>
<feature type="compositionally biased region" description="Polar residues" evidence="4">
    <location>
        <begin position="548"/>
        <end position="566"/>
    </location>
</feature>
<feature type="binding site" evidence="2">
    <location>
        <position position="48"/>
    </location>
    <ligand>
        <name>[2Fe-2S] cluster</name>
        <dbReference type="ChEBI" id="CHEBI:190135"/>
    </ligand>
</feature>
<feature type="binding site" evidence="2">
    <location>
        <position position="53"/>
    </location>
    <ligand>
        <name>[2Fe-2S] cluster</name>
        <dbReference type="ChEBI" id="CHEBI:190135"/>
    </ligand>
</feature>
<feature type="binding site" evidence="2">
    <location>
        <position position="56"/>
    </location>
    <ligand>
        <name>[2Fe-2S] cluster</name>
        <dbReference type="ChEBI" id="CHEBI:190135"/>
    </ligand>
</feature>
<feature type="binding site" evidence="2">
    <location>
        <position position="78"/>
    </location>
    <ligand>
        <name>[2Fe-2S] cluster</name>
        <dbReference type="ChEBI" id="CHEBI:190135"/>
    </ligand>
</feature>
<proteinExistence type="evidence at transcript level"/>
<evidence type="ECO:0000250" key="1"/>
<evidence type="ECO:0000255" key="2">
    <source>
        <dbReference type="PROSITE-ProRule" id="PRU00465"/>
    </source>
</evidence>
<evidence type="ECO:0000255" key="3">
    <source>
        <dbReference type="PROSITE-ProRule" id="PRU00718"/>
    </source>
</evidence>
<evidence type="ECO:0000256" key="4">
    <source>
        <dbReference type="SAM" id="MobiDB-lite"/>
    </source>
</evidence>
<evidence type="ECO:0000305" key="5"/>
<organism>
    <name type="scientific">Oryza sativa subsp. japonica</name>
    <name type="common">Rice</name>
    <dbReference type="NCBI Taxonomy" id="39947"/>
    <lineage>
        <taxon>Eukaryota</taxon>
        <taxon>Viridiplantae</taxon>
        <taxon>Streptophyta</taxon>
        <taxon>Embryophyta</taxon>
        <taxon>Tracheophyta</taxon>
        <taxon>Spermatophyta</taxon>
        <taxon>Magnoliopsida</taxon>
        <taxon>Liliopsida</taxon>
        <taxon>Poales</taxon>
        <taxon>Poaceae</taxon>
        <taxon>BOP clade</taxon>
        <taxon>Oryzoideae</taxon>
        <taxon>Oryzeae</taxon>
        <taxon>Oryzinae</taxon>
        <taxon>Oryza</taxon>
        <taxon>Oryza sativa</taxon>
    </lineage>
</organism>
<reference key="1">
    <citation type="journal article" date="2005" name="Genome Res.">
        <title>Sequence, annotation, and analysis of synteny between rice chromosome 3 and diverged grass species.</title>
        <authorList>
            <consortium name="The rice chromosome 3 sequencing consortium"/>
            <person name="Buell C.R."/>
            <person name="Yuan Q."/>
            <person name="Ouyang S."/>
            <person name="Liu J."/>
            <person name="Zhu W."/>
            <person name="Wang A."/>
            <person name="Maiti R."/>
            <person name="Haas B."/>
            <person name="Wortman J."/>
            <person name="Pertea M."/>
            <person name="Jones K.M."/>
            <person name="Kim M."/>
            <person name="Overton L."/>
            <person name="Tsitrin T."/>
            <person name="Fadrosh D."/>
            <person name="Bera J."/>
            <person name="Weaver B."/>
            <person name="Jin S."/>
            <person name="Johri S."/>
            <person name="Reardon M."/>
            <person name="Webb K."/>
            <person name="Hill J."/>
            <person name="Moffat K."/>
            <person name="Tallon L."/>
            <person name="Van Aken S."/>
            <person name="Lewis M."/>
            <person name="Utterback T."/>
            <person name="Feldblyum T."/>
            <person name="Zismann V."/>
            <person name="Iobst S."/>
            <person name="Hsiao J."/>
            <person name="de Vazeille A.R."/>
            <person name="Salzberg S.L."/>
            <person name="White O."/>
            <person name="Fraser C.M."/>
            <person name="Yu Y."/>
            <person name="Kim H."/>
            <person name="Rambo T."/>
            <person name="Currie J."/>
            <person name="Collura K."/>
            <person name="Kernodle-Thompson S."/>
            <person name="Wei F."/>
            <person name="Kudrna K."/>
            <person name="Ammiraju J.S.S."/>
            <person name="Luo M."/>
            <person name="Goicoechea J.L."/>
            <person name="Wing R.A."/>
            <person name="Henry D."/>
            <person name="Oates R."/>
            <person name="Palmer M."/>
            <person name="Pries G."/>
            <person name="Saski C."/>
            <person name="Simmons J."/>
            <person name="Soderlund C."/>
            <person name="Nelson W."/>
            <person name="de la Bastide M."/>
            <person name="Spiegel L."/>
            <person name="Nascimento L."/>
            <person name="Huang E."/>
            <person name="Preston R."/>
            <person name="Zutavern T."/>
            <person name="Palmer L."/>
            <person name="O'Shaughnessy A."/>
            <person name="Dike S."/>
            <person name="McCombie W.R."/>
            <person name="Minx P."/>
            <person name="Cordum H."/>
            <person name="Wilson R."/>
            <person name="Jin W."/>
            <person name="Lee H.R."/>
            <person name="Jiang J."/>
            <person name="Jackson S."/>
        </authorList>
    </citation>
    <scope>NUCLEOTIDE SEQUENCE [LARGE SCALE GENOMIC DNA]</scope>
    <source>
        <strain>cv. Nipponbare</strain>
    </source>
</reference>
<reference key="2">
    <citation type="journal article" date="2005" name="Nature">
        <title>The map-based sequence of the rice genome.</title>
        <authorList>
            <consortium name="International rice genome sequencing project (IRGSP)"/>
        </authorList>
    </citation>
    <scope>NUCLEOTIDE SEQUENCE [LARGE SCALE GENOMIC DNA]</scope>
    <source>
        <strain>cv. Nipponbare</strain>
    </source>
</reference>
<reference key="3">
    <citation type="journal article" date="2013" name="Rice">
        <title>Improvement of the Oryza sativa Nipponbare reference genome using next generation sequence and optical map data.</title>
        <authorList>
            <person name="Kawahara Y."/>
            <person name="de la Bastide M."/>
            <person name="Hamilton J.P."/>
            <person name="Kanamori H."/>
            <person name="McCombie W.R."/>
            <person name="Ouyang S."/>
            <person name="Schwartz D.C."/>
            <person name="Tanaka T."/>
            <person name="Wu J."/>
            <person name="Zhou S."/>
            <person name="Childs K.L."/>
            <person name="Davidson R.M."/>
            <person name="Lin H."/>
            <person name="Quesada-Ocampo L."/>
            <person name="Vaillancourt B."/>
            <person name="Sakai H."/>
            <person name="Lee S.S."/>
            <person name="Kim J."/>
            <person name="Numa H."/>
            <person name="Itoh T."/>
            <person name="Buell C.R."/>
            <person name="Matsumoto T."/>
        </authorList>
    </citation>
    <scope>GENOME REANNOTATION</scope>
    <source>
        <strain>cv. Nipponbare</strain>
    </source>
</reference>
<reference key="4">
    <citation type="journal article" date="2003" name="Science">
        <title>Collection, mapping, and annotation of over 28,000 cDNA clones from japonica rice.</title>
        <authorList>
            <consortium name="The rice full-length cDNA consortium"/>
        </authorList>
    </citation>
    <scope>NUCLEOTIDE SEQUENCE [LARGE SCALE MRNA]</scope>
    <source>
        <strain>cv. Nipponbare</strain>
    </source>
</reference>
<dbReference type="EC" id="1.2.3.1"/>
<dbReference type="EMBL" id="AC087096">
    <property type="protein sequence ID" value="AAO24920.1"/>
    <property type="molecule type" value="Genomic_DNA"/>
</dbReference>
<dbReference type="EMBL" id="AP014959">
    <property type="status" value="NOT_ANNOTATED_CDS"/>
    <property type="molecule type" value="Genomic_DNA"/>
</dbReference>
<dbReference type="EMBL" id="AK100342">
    <property type="status" value="NOT_ANNOTATED_CDS"/>
    <property type="molecule type" value="mRNA"/>
</dbReference>
<dbReference type="RefSeq" id="XP_015630439.1">
    <property type="nucleotide sequence ID" value="XM_015774953.1"/>
</dbReference>
<dbReference type="SMR" id="Q852M1"/>
<dbReference type="FunCoup" id="Q852M1">
    <property type="interactions" value="6"/>
</dbReference>
<dbReference type="STRING" id="39947.Q852M1"/>
<dbReference type="PaxDb" id="39947-Q852M1"/>
<dbReference type="eggNOG" id="KOG0430">
    <property type="taxonomic scope" value="Eukaryota"/>
</dbReference>
<dbReference type="InParanoid" id="Q852M1"/>
<dbReference type="OrthoDB" id="8300278at2759"/>
<dbReference type="PlantReactome" id="R-OSA-1119374">
    <property type="pathway name" value="Abscisic acid biosynthesis"/>
</dbReference>
<dbReference type="PlantReactome" id="R-OSA-1119486">
    <property type="pathway name" value="IAA biosynthesis I"/>
</dbReference>
<dbReference type="Proteomes" id="UP000000763">
    <property type="component" value="Chromosome 3"/>
</dbReference>
<dbReference type="Proteomes" id="UP000059680">
    <property type="component" value="Chromosome 3"/>
</dbReference>
<dbReference type="GO" id="GO:0051537">
    <property type="term" value="F:2 iron, 2 sulfur cluster binding"/>
    <property type="evidence" value="ECO:0007669"/>
    <property type="project" value="UniProtKB-KW"/>
</dbReference>
<dbReference type="GO" id="GO:0004031">
    <property type="term" value="F:aldehyde oxidase activity"/>
    <property type="evidence" value="ECO:0007669"/>
    <property type="project" value="UniProtKB-EC"/>
</dbReference>
<dbReference type="GO" id="GO:0071949">
    <property type="term" value="F:FAD binding"/>
    <property type="evidence" value="ECO:0007669"/>
    <property type="project" value="InterPro"/>
</dbReference>
<dbReference type="GO" id="GO:0005506">
    <property type="term" value="F:iron ion binding"/>
    <property type="evidence" value="ECO:0007669"/>
    <property type="project" value="InterPro"/>
</dbReference>
<dbReference type="GO" id="GO:0016491">
    <property type="term" value="F:oxidoreductase activity"/>
    <property type="evidence" value="ECO:0000318"/>
    <property type="project" value="GO_Central"/>
</dbReference>
<dbReference type="GO" id="GO:0009688">
    <property type="term" value="P:abscisic acid biosynthetic process"/>
    <property type="evidence" value="ECO:0007669"/>
    <property type="project" value="UniProtKB-KW"/>
</dbReference>
<dbReference type="GO" id="GO:0009851">
    <property type="term" value="P:auxin biosynthetic process"/>
    <property type="evidence" value="ECO:0007669"/>
    <property type="project" value="UniProtKB-KW"/>
</dbReference>
<dbReference type="FunFam" id="1.10.150.120:FF:000006">
    <property type="entry name" value="Aldehyde oxidase"/>
    <property type="match status" value="1"/>
</dbReference>
<dbReference type="FunFam" id="3.30.365.10:FF:000008">
    <property type="entry name" value="Aldehyde oxidase1"/>
    <property type="match status" value="1"/>
</dbReference>
<dbReference type="FunFam" id="3.30.390.50:FF:000003">
    <property type="entry name" value="Aldehyde oxidase1"/>
    <property type="match status" value="1"/>
</dbReference>
<dbReference type="FunFam" id="3.90.1170.50:FF:000007">
    <property type="entry name" value="Aldehyde oxidase1"/>
    <property type="match status" value="1"/>
</dbReference>
<dbReference type="FunFam" id="3.30.365.10:FF:000001">
    <property type="entry name" value="Xanthine dehydrogenase oxidase"/>
    <property type="match status" value="1"/>
</dbReference>
<dbReference type="FunFam" id="3.10.20.30:FF:000012">
    <property type="entry name" value="Xanthine dehydrogenase/oxidase"/>
    <property type="match status" value="1"/>
</dbReference>
<dbReference type="Gene3D" id="3.10.20.30">
    <property type="match status" value="1"/>
</dbReference>
<dbReference type="Gene3D" id="3.30.465.10">
    <property type="match status" value="1"/>
</dbReference>
<dbReference type="Gene3D" id="1.10.150.120">
    <property type="entry name" value="[2Fe-2S]-binding domain"/>
    <property type="match status" value="1"/>
</dbReference>
<dbReference type="Gene3D" id="3.90.1170.50">
    <property type="entry name" value="Aldehyde oxidase/xanthine dehydrogenase, a/b hammerhead"/>
    <property type="match status" value="1"/>
</dbReference>
<dbReference type="Gene3D" id="3.30.365.10">
    <property type="entry name" value="Aldehyde oxidase/xanthine dehydrogenase, molybdopterin binding domain"/>
    <property type="match status" value="4"/>
</dbReference>
<dbReference type="Gene3D" id="3.30.390.50">
    <property type="entry name" value="CO dehydrogenase flavoprotein, C-terminal domain"/>
    <property type="match status" value="1"/>
</dbReference>
<dbReference type="InterPro" id="IPR002888">
    <property type="entry name" value="2Fe-2S-bd"/>
</dbReference>
<dbReference type="InterPro" id="IPR036884">
    <property type="entry name" value="2Fe-2S-bd_dom_sf"/>
</dbReference>
<dbReference type="InterPro" id="IPR036010">
    <property type="entry name" value="2Fe-2S_ferredoxin-like_sf"/>
</dbReference>
<dbReference type="InterPro" id="IPR001041">
    <property type="entry name" value="2Fe-2S_ferredoxin-type"/>
</dbReference>
<dbReference type="InterPro" id="IPR006058">
    <property type="entry name" value="2Fe2S_fd_BS"/>
</dbReference>
<dbReference type="InterPro" id="IPR000674">
    <property type="entry name" value="Ald_Oxase/Xan_DH_a/b"/>
</dbReference>
<dbReference type="InterPro" id="IPR036856">
    <property type="entry name" value="Ald_Oxase/Xan_DH_a/b_sf"/>
</dbReference>
<dbReference type="InterPro" id="IPR016208">
    <property type="entry name" value="Ald_Oxase/xanthine_DH-like"/>
</dbReference>
<dbReference type="InterPro" id="IPR008274">
    <property type="entry name" value="AldOxase/xan_DH_MoCoBD1"/>
</dbReference>
<dbReference type="InterPro" id="IPR046867">
    <property type="entry name" value="AldOxase/xan_DH_MoCoBD2"/>
</dbReference>
<dbReference type="InterPro" id="IPR037165">
    <property type="entry name" value="AldOxase/xan_DH_Mopterin-bd_sf"/>
</dbReference>
<dbReference type="InterPro" id="IPR012675">
    <property type="entry name" value="Beta-grasp_dom_sf"/>
</dbReference>
<dbReference type="InterPro" id="IPR005107">
    <property type="entry name" value="CO_DH_flav_C"/>
</dbReference>
<dbReference type="InterPro" id="IPR036683">
    <property type="entry name" value="CO_DH_flav_C_dom_sf"/>
</dbReference>
<dbReference type="InterPro" id="IPR016166">
    <property type="entry name" value="FAD-bd_PCMH"/>
</dbReference>
<dbReference type="InterPro" id="IPR036318">
    <property type="entry name" value="FAD-bd_PCMH-like_sf"/>
</dbReference>
<dbReference type="InterPro" id="IPR016169">
    <property type="entry name" value="FAD-bd_PCMH_sub2"/>
</dbReference>
<dbReference type="InterPro" id="IPR002346">
    <property type="entry name" value="Mopterin_DH_FAD-bd"/>
</dbReference>
<dbReference type="PANTHER" id="PTHR11908:SF92">
    <property type="entry name" value="ALDEHYDE OXIDASE 1-RELATED"/>
    <property type="match status" value="1"/>
</dbReference>
<dbReference type="PANTHER" id="PTHR11908">
    <property type="entry name" value="XANTHINE DEHYDROGENASE"/>
    <property type="match status" value="1"/>
</dbReference>
<dbReference type="Pfam" id="PF01315">
    <property type="entry name" value="Ald_Xan_dh_C"/>
    <property type="match status" value="1"/>
</dbReference>
<dbReference type="Pfam" id="PF03450">
    <property type="entry name" value="CO_deh_flav_C"/>
    <property type="match status" value="1"/>
</dbReference>
<dbReference type="Pfam" id="PF00941">
    <property type="entry name" value="FAD_binding_5"/>
    <property type="match status" value="1"/>
</dbReference>
<dbReference type="Pfam" id="PF00111">
    <property type="entry name" value="Fer2"/>
    <property type="match status" value="1"/>
</dbReference>
<dbReference type="Pfam" id="PF01799">
    <property type="entry name" value="Fer2_2"/>
    <property type="match status" value="1"/>
</dbReference>
<dbReference type="Pfam" id="PF02738">
    <property type="entry name" value="MoCoBD_1"/>
    <property type="match status" value="1"/>
</dbReference>
<dbReference type="Pfam" id="PF20256">
    <property type="entry name" value="MoCoBD_2"/>
    <property type="match status" value="1"/>
</dbReference>
<dbReference type="PIRSF" id="PIRSF000127">
    <property type="entry name" value="Xanthine_DH"/>
    <property type="match status" value="1"/>
</dbReference>
<dbReference type="SMART" id="SM01008">
    <property type="entry name" value="Ald_Xan_dh_C"/>
    <property type="match status" value="1"/>
</dbReference>
<dbReference type="SMART" id="SM01092">
    <property type="entry name" value="CO_deh_flav_C"/>
    <property type="match status" value="1"/>
</dbReference>
<dbReference type="SUPFAM" id="SSF54292">
    <property type="entry name" value="2Fe-2S ferredoxin-like"/>
    <property type="match status" value="1"/>
</dbReference>
<dbReference type="SUPFAM" id="SSF55447">
    <property type="entry name" value="CO dehydrogenase flavoprotein C-terminal domain-like"/>
    <property type="match status" value="1"/>
</dbReference>
<dbReference type="SUPFAM" id="SSF47741">
    <property type="entry name" value="CO dehydrogenase ISP C-domain like"/>
    <property type="match status" value="1"/>
</dbReference>
<dbReference type="SUPFAM" id="SSF54665">
    <property type="entry name" value="CO dehydrogenase molybdoprotein N-domain-like"/>
    <property type="match status" value="1"/>
</dbReference>
<dbReference type="SUPFAM" id="SSF56176">
    <property type="entry name" value="FAD-binding/transporter-associated domain-like"/>
    <property type="match status" value="1"/>
</dbReference>
<dbReference type="SUPFAM" id="SSF56003">
    <property type="entry name" value="Molybdenum cofactor-binding domain"/>
    <property type="match status" value="1"/>
</dbReference>
<dbReference type="PROSITE" id="PS00197">
    <property type="entry name" value="2FE2S_FER_1"/>
    <property type="match status" value="1"/>
</dbReference>
<dbReference type="PROSITE" id="PS51085">
    <property type="entry name" value="2FE2S_FER_2"/>
    <property type="match status" value="1"/>
</dbReference>
<dbReference type="PROSITE" id="PS51387">
    <property type="entry name" value="FAD_PCMH"/>
    <property type="match status" value="1"/>
</dbReference>
<protein>
    <recommendedName>
        <fullName>Probable aldehyde oxidase 2</fullName>
        <shortName>AO-2</shortName>
        <ecNumber>1.2.3.1</ecNumber>
    </recommendedName>
</protein>